<dbReference type="EMBL" id="AAFI02000188">
    <property type="protein sequence ID" value="EAL61324.1"/>
    <property type="molecule type" value="Genomic_DNA"/>
</dbReference>
<dbReference type="RefSeq" id="XP_629731.1">
    <property type="nucleotide sequence ID" value="XM_629729.1"/>
</dbReference>
<dbReference type="SMR" id="Q54DJ6"/>
<dbReference type="PaxDb" id="44689-DDB0302630"/>
<dbReference type="EnsemblProtists" id="EAL61324">
    <property type="protein sequence ID" value="EAL61324"/>
    <property type="gene ID" value="DDB_G0292228"/>
</dbReference>
<dbReference type="GeneID" id="8628559"/>
<dbReference type="KEGG" id="ddi:DDB_G0292228"/>
<dbReference type="dictyBase" id="DDB_G0292228"/>
<dbReference type="HOGENOM" id="CLU_3321092_0_0_1"/>
<dbReference type="InParanoid" id="Q54DJ6"/>
<dbReference type="PRO" id="PR:Q54DJ6"/>
<dbReference type="Proteomes" id="UP000002195">
    <property type="component" value="Chromosome 6"/>
</dbReference>
<sequence length="39" mass="4487">MYKLATLEFIKKAKTLKLLSQKTQTTSKIQTFSSIKLLI</sequence>
<gene>
    <name type="ORF">DDB_G0292228</name>
</gene>
<protein>
    <recommendedName>
        <fullName>Putative uncharacterized protein DDB_G0292228</fullName>
    </recommendedName>
</protein>
<reference key="1">
    <citation type="journal article" date="2005" name="Nature">
        <title>The genome of the social amoeba Dictyostelium discoideum.</title>
        <authorList>
            <person name="Eichinger L."/>
            <person name="Pachebat J.A."/>
            <person name="Gloeckner G."/>
            <person name="Rajandream M.A."/>
            <person name="Sucgang R."/>
            <person name="Berriman M."/>
            <person name="Song J."/>
            <person name="Olsen R."/>
            <person name="Szafranski K."/>
            <person name="Xu Q."/>
            <person name="Tunggal B."/>
            <person name="Kummerfeld S."/>
            <person name="Madera M."/>
            <person name="Konfortov B.A."/>
            <person name="Rivero F."/>
            <person name="Bankier A.T."/>
            <person name="Lehmann R."/>
            <person name="Hamlin N."/>
            <person name="Davies R."/>
            <person name="Gaudet P."/>
            <person name="Fey P."/>
            <person name="Pilcher K."/>
            <person name="Chen G."/>
            <person name="Saunders D."/>
            <person name="Sodergren E.J."/>
            <person name="Davis P."/>
            <person name="Kerhornou A."/>
            <person name="Nie X."/>
            <person name="Hall N."/>
            <person name="Anjard C."/>
            <person name="Hemphill L."/>
            <person name="Bason N."/>
            <person name="Farbrother P."/>
            <person name="Desany B."/>
            <person name="Just E."/>
            <person name="Morio T."/>
            <person name="Rost R."/>
            <person name="Churcher C.M."/>
            <person name="Cooper J."/>
            <person name="Haydock S."/>
            <person name="van Driessche N."/>
            <person name="Cronin A."/>
            <person name="Goodhead I."/>
            <person name="Muzny D.M."/>
            <person name="Mourier T."/>
            <person name="Pain A."/>
            <person name="Lu M."/>
            <person name="Harper D."/>
            <person name="Lindsay R."/>
            <person name="Hauser H."/>
            <person name="James K.D."/>
            <person name="Quiles M."/>
            <person name="Madan Babu M."/>
            <person name="Saito T."/>
            <person name="Buchrieser C."/>
            <person name="Wardroper A."/>
            <person name="Felder M."/>
            <person name="Thangavelu M."/>
            <person name="Johnson D."/>
            <person name="Knights A."/>
            <person name="Loulseged H."/>
            <person name="Mungall K.L."/>
            <person name="Oliver K."/>
            <person name="Price C."/>
            <person name="Quail M.A."/>
            <person name="Urushihara H."/>
            <person name="Hernandez J."/>
            <person name="Rabbinowitsch E."/>
            <person name="Steffen D."/>
            <person name="Sanders M."/>
            <person name="Ma J."/>
            <person name="Kohara Y."/>
            <person name="Sharp S."/>
            <person name="Simmonds M.N."/>
            <person name="Spiegler S."/>
            <person name="Tivey A."/>
            <person name="Sugano S."/>
            <person name="White B."/>
            <person name="Walker D."/>
            <person name="Woodward J.R."/>
            <person name="Winckler T."/>
            <person name="Tanaka Y."/>
            <person name="Shaulsky G."/>
            <person name="Schleicher M."/>
            <person name="Weinstock G.M."/>
            <person name="Rosenthal A."/>
            <person name="Cox E.C."/>
            <person name="Chisholm R.L."/>
            <person name="Gibbs R.A."/>
            <person name="Loomis W.F."/>
            <person name="Platzer M."/>
            <person name="Kay R.R."/>
            <person name="Williams J.G."/>
            <person name="Dear P.H."/>
            <person name="Noegel A.A."/>
            <person name="Barrell B.G."/>
            <person name="Kuspa A."/>
        </authorList>
    </citation>
    <scope>NUCLEOTIDE SEQUENCE [LARGE SCALE GENOMIC DNA]</scope>
    <source>
        <strain>AX4</strain>
    </source>
</reference>
<proteinExistence type="predicted"/>
<organism>
    <name type="scientific">Dictyostelium discoideum</name>
    <name type="common">Social amoeba</name>
    <dbReference type="NCBI Taxonomy" id="44689"/>
    <lineage>
        <taxon>Eukaryota</taxon>
        <taxon>Amoebozoa</taxon>
        <taxon>Evosea</taxon>
        <taxon>Eumycetozoa</taxon>
        <taxon>Dictyostelia</taxon>
        <taxon>Dictyosteliales</taxon>
        <taxon>Dictyosteliaceae</taxon>
        <taxon>Dictyostelium</taxon>
    </lineage>
</organism>
<accession>Q54DJ6</accession>
<feature type="chain" id="PRO_0000344407" description="Putative uncharacterized protein DDB_G0292228">
    <location>
        <begin position="1"/>
        <end position="39"/>
    </location>
</feature>
<keyword id="KW-1185">Reference proteome</keyword>
<name>Y4279_DICDI</name>